<keyword id="KW-1185">Reference proteome</keyword>
<keyword id="KW-0687">Ribonucleoprotein</keyword>
<keyword id="KW-0689">Ribosomal protein</keyword>
<keyword id="KW-0694">RNA-binding</keyword>
<keyword id="KW-0699">rRNA-binding</keyword>
<keyword id="KW-0820">tRNA-binding</keyword>
<gene>
    <name evidence="1" type="primary">rpsG</name>
    <name type="ordered locus">Dde_2262</name>
</gene>
<evidence type="ECO:0000255" key="1">
    <source>
        <dbReference type="HAMAP-Rule" id="MF_00480"/>
    </source>
</evidence>
<evidence type="ECO:0000305" key="2"/>
<organism>
    <name type="scientific">Oleidesulfovibrio alaskensis (strain ATCC BAA-1058 / DSM 17464 / G20)</name>
    <name type="common">Desulfovibrio alaskensis</name>
    <dbReference type="NCBI Taxonomy" id="207559"/>
    <lineage>
        <taxon>Bacteria</taxon>
        <taxon>Pseudomonadati</taxon>
        <taxon>Thermodesulfobacteriota</taxon>
        <taxon>Desulfovibrionia</taxon>
        <taxon>Desulfovibrionales</taxon>
        <taxon>Desulfovibrionaceae</taxon>
        <taxon>Oleidesulfovibrio</taxon>
    </lineage>
</organism>
<reference key="1">
    <citation type="journal article" date="2011" name="J. Bacteriol.">
        <title>Complete genome sequence and updated annotation of Desulfovibrio alaskensis G20.</title>
        <authorList>
            <person name="Hauser L.J."/>
            <person name="Land M.L."/>
            <person name="Brown S.D."/>
            <person name="Larimer F."/>
            <person name="Keller K.L."/>
            <person name="Rapp-Giles B.J."/>
            <person name="Price M.N."/>
            <person name="Lin M."/>
            <person name="Bruce D.C."/>
            <person name="Detter J.C."/>
            <person name="Tapia R."/>
            <person name="Han C.S."/>
            <person name="Goodwin L.A."/>
            <person name="Cheng J.F."/>
            <person name="Pitluck S."/>
            <person name="Copeland A."/>
            <person name="Lucas S."/>
            <person name="Nolan M."/>
            <person name="Lapidus A.L."/>
            <person name="Palumbo A.V."/>
            <person name="Wall J.D."/>
        </authorList>
    </citation>
    <scope>NUCLEOTIDE SEQUENCE [LARGE SCALE GENOMIC DNA]</scope>
    <source>
        <strain>ATCC BAA-1058 / DSM 17464 / G20</strain>
    </source>
</reference>
<accession>Q30Z37</accession>
<feature type="chain" id="PRO_0000226498" description="Small ribosomal subunit protein uS7">
    <location>
        <begin position="1"/>
        <end position="156"/>
    </location>
</feature>
<name>RS7_OLEA2</name>
<proteinExistence type="inferred from homology"/>
<sequence length="156" mass="17661">MPRKGPIPRREVLPDPVYNSRLAARFVNRMMVDGKKGAAEKIFYKSLEVLQEKTGEDAIKAFEKAVDNVKPFVEVKSRRVGGATYQVPVEVRSDRQVSLAIRWLITYARARGEKGMVGRLSGELLDAFNNRGGAVKKKDDTHRMAEANKAFAHFRW</sequence>
<protein>
    <recommendedName>
        <fullName evidence="1">Small ribosomal subunit protein uS7</fullName>
    </recommendedName>
    <alternativeName>
        <fullName evidence="2">30S ribosomal protein S7</fullName>
    </alternativeName>
</protein>
<comment type="function">
    <text evidence="1">One of the primary rRNA binding proteins, it binds directly to 16S rRNA where it nucleates assembly of the head domain of the 30S subunit. Is located at the subunit interface close to the decoding center, probably blocks exit of the E-site tRNA.</text>
</comment>
<comment type="subunit">
    <text evidence="1">Part of the 30S ribosomal subunit. Contacts proteins S9 and S11.</text>
</comment>
<comment type="similarity">
    <text evidence="1">Belongs to the universal ribosomal protein uS7 family.</text>
</comment>
<dbReference type="EMBL" id="CP000112">
    <property type="protein sequence ID" value="ABB39059.1"/>
    <property type="molecule type" value="Genomic_DNA"/>
</dbReference>
<dbReference type="RefSeq" id="WP_011368147.1">
    <property type="nucleotide sequence ID" value="NC_007519.1"/>
</dbReference>
<dbReference type="SMR" id="Q30Z37"/>
<dbReference type="STRING" id="207559.Dde_2262"/>
<dbReference type="KEGG" id="dde:Dde_2262"/>
<dbReference type="eggNOG" id="COG0049">
    <property type="taxonomic scope" value="Bacteria"/>
</dbReference>
<dbReference type="HOGENOM" id="CLU_072226_1_1_7"/>
<dbReference type="Proteomes" id="UP000002710">
    <property type="component" value="Chromosome"/>
</dbReference>
<dbReference type="GO" id="GO:0015935">
    <property type="term" value="C:small ribosomal subunit"/>
    <property type="evidence" value="ECO:0007669"/>
    <property type="project" value="InterPro"/>
</dbReference>
<dbReference type="GO" id="GO:0019843">
    <property type="term" value="F:rRNA binding"/>
    <property type="evidence" value="ECO:0007669"/>
    <property type="project" value="UniProtKB-UniRule"/>
</dbReference>
<dbReference type="GO" id="GO:0003735">
    <property type="term" value="F:structural constituent of ribosome"/>
    <property type="evidence" value="ECO:0007669"/>
    <property type="project" value="InterPro"/>
</dbReference>
<dbReference type="GO" id="GO:0000049">
    <property type="term" value="F:tRNA binding"/>
    <property type="evidence" value="ECO:0007669"/>
    <property type="project" value="UniProtKB-UniRule"/>
</dbReference>
<dbReference type="GO" id="GO:0006412">
    <property type="term" value="P:translation"/>
    <property type="evidence" value="ECO:0007669"/>
    <property type="project" value="UniProtKB-UniRule"/>
</dbReference>
<dbReference type="CDD" id="cd14869">
    <property type="entry name" value="uS7_Bacteria"/>
    <property type="match status" value="1"/>
</dbReference>
<dbReference type="FunFam" id="1.10.455.10:FF:000001">
    <property type="entry name" value="30S ribosomal protein S7"/>
    <property type="match status" value="1"/>
</dbReference>
<dbReference type="Gene3D" id="1.10.455.10">
    <property type="entry name" value="Ribosomal protein S7 domain"/>
    <property type="match status" value="1"/>
</dbReference>
<dbReference type="HAMAP" id="MF_00480_B">
    <property type="entry name" value="Ribosomal_uS7_B"/>
    <property type="match status" value="1"/>
</dbReference>
<dbReference type="InterPro" id="IPR000235">
    <property type="entry name" value="Ribosomal_uS7"/>
</dbReference>
<dbReference type="InterPro" id="IPR005717">
    <property type="entry name" value="Ribosomal_uS7_bac/org-type"/>
</dbReference>
<dbReference type="InterPro" id="IPR020606">
    <property type="entry name" value="Ribosomal_uS7_CS"/>
</dbReference>
<dbReference type="InterPro" id="IPR023798">
    <property type="entry name" value="Ribosomal_uS7_dom"/>
</dbReference>
<dbReference type="InterPro" id="IPR036823">
    <property type="entry name" value="Ribosomal_uS7_dom_sf"/>
</dbReference>
<dbReference type="NCBIfam" id="TIGR01029">
    <property type="entry name" value="rpsG_bact"/>
    <property type="match status" value="1"/>
</dbReference>
<dbReference type="PANTHER" id="PTHR11205">
    <property type="entry name" value="RIBOSOMAL PROTEIN S7"/>
    <property type="match status" value="1"/>
</dbReference>
<dbReference type="Pfam" id="PF00177">
    <property type="entry name" value="Ribosomal_S7"/>
    <property type="match status" value="1"/>
</dbReference>
<dbReference type="PIRSF" id="PIRSF002122">
    <property type="entry name" value="RPS7p_RPS7a_RPS5e_RPS7o"/>
    <property type="match status" value="1"/>
</dbReference>
<dbReference type="SUPFAM" id="SSF47973">
    <property type="entry name" value="Ribosomal protein S7"/>
    <property type="match status" value="1"/>
</dbReference>
<dbReference type="PROSITE" id="PS00052">
    <property type="entry name" value="RIBOSOMAL_S7"/>
    <property type="match status" value="1"/>
</dbReference>